<protein>
    <recommendedName>
        <fullName evidence="1">Uracil-DNA glycosylase</fullName>
        <shortName evidence="1">UDG</shortName>
        <ecNumber evidence="1">3.2.2.27</ecNumber>
    </recommendedName>
</protein>
<keyword id="KW-0963">Cytoplasm</keyword>
<keyword id="KW-0227">DNA damage</keyword>
<keyword id="KW-0234">DNA repair</keyword>
<keyword id="KW-0378">Hydrolase</keyword>
<accession>C1CED4</accession>
<name>UNG_STRZJ</name>
<comment type="function">
    <text evidence="1">Excises uracil residues from the DNA which can arise as a result of misincorporation of dUMP residues by DNA polymerase or due to deamination of cytosine.</text>
</comment>
<comment type="catalytic activity">
    <reaction evidence="1">
        <text>Hydrolyzes single-stranded DNA or mismatched double-stranded DNA and polynucleotides, releasing free uracil.</text>
        <dbReference type="EC" id="3.2.2.27"/>
    </reaction>
</comment>
<comment type="subcellular location">
    <subcellularLocation>
        <location evidence="1">Cytoplasm</location>
    </subcellularLocation>
</comment>
<comment type="similarity">
    <text evidence="1">Belongs to the uracil-DNA glycosylase (UDG) superfamily. UNG family.</text>
</comment>
<dbReference type="EC" id="3.2.2.27" evidence="1"/>
<dbReference type="EMBL" id="CP000919">
    <property type="protein sequence ID" value="ACO18420.1"/>
    <property type="molecule type" value="Genomic_DNA"/>
</dbReference>
<dbReference type="RefSeq" id="WP_000401326.1">
    <property type="nucleotide sequence ID" value="NC_012466.1"/>
</dbReference>
<dbReference type="SMR" id="C1CED4"/>
<dbReference type="KEGG" id="sjj:SPJ_1087"/>
<dbReference type="HOGENOM" id="CLU_032162_3_1_9"/>
<dbReference type="Proteomes" id="UP000002206">
    <property type="component" value="Chromosome"/>
</dbReference>
<dbReference type="GO" id="GO:0005737">
    <property type="term" value="C:cytoplasm"/>
    <property type="evidence" value="ECO:0007669"/>
    <property type="project" value="UniProtKB-SubCell"/>
</dbReference>
<dbReference type="GO" id="GO:0004844">
    <property type="term" value="F:uracil DNA N-glycosylase activity"/>
    <property type="evidence" value="ECO:0007669"/>
    <property type="project" value="UniProtKB-UniRule"/>
</dbReference>
<dbReference type="GO" id="GO:0097510">
    <property type="term" value="P:base-excision repair, AP site formation via deaminated base removal"/>
    <property type="evidence" value="ECO:0007669"/>
    <property type="project" value="TreeGrafter"/>
</dbReference>
<dbReference type="CDD" id="cd10027">
    <property type="entry name" value="UDG-F1-like"/>
    <property type="match status" value="1"/>
</dbReference>
<dbReference type="FunFam" id="3.40.470.10:FF:000008">
    <property type="entry name" value="Uracil-DNA glycosylase"/>
    <property type="match status" value="1"/>
</dbReference>
<dbReference type="Gene3D" id="3.40.470.10">
    <property type="entry name" value="Uracil-DNA glycosylase-like domain"/>
    <property type="match status" value="1"/>
</dbReference>
<dbReference type="HAMAP" id="MF_00148">
    <property type="entry name" value="UDG"/>
    <property type="match status" value="1"/>
</dbReference>
<dbReference type="InterPro" id="IPR002043">
    <property type="entry name" value="UDG_fam1"/>
</dbReference>
<dbReference type="InterPro" id="IPR018085">
    <property type="entry name" value="Ura-DNA_Glyclase_AS"/>
</dbReference>
<dbReference type="InterPro" id="IPR005122">
    <property type="entry name" value="Uracil-DNA_glycosylase-like"/>
</dbReference>
<dbReference type="InterPro" id="IPR036895">
    <property type="entry name" value="Uracil-DNA_glycosylase-like_sf"/>
</dbReference>
<dbReference type="NCBIfam" id="NF003588">
    <property type="entry name" value="PRK05254.1-1"/>
    <property type="match status" value="1"/>
</dbReference>
<dbReference type="NCBIfam" id="NF003589">
    <property type="entry name" value="PRK05254.1-2"/>
    <property type="match status" value="1"/>
</dbReference>
<dbReference type="NCBIfam" id="NF003591">
    <property type="entry name" value="PRK05254.1-4"/>
    <property type="match status" value="1"/>
</dbReference>
<dbReference type="NCBIfam" id="NF003592">
    <property type="entry name" value="PRK05254.1-5"/>
    <property type="match status" value="1"/>
</dbReference>
<dbReference type="NCBIfam" id="TIGR00628">
    <property type="entry name" value="ung"/>
    <property type="match status" value="1"/>
</dbReference>
<dbReference type="PANTHER" id="PTHR11264">
    <property type="entry name" value="URACIL-DNA GLYCOSYLASE"/>
    <property type="match status" value="1"/>
</dbReference>
<dbReference type="PANTHER" id="PTHR11264:SF0">
    <property type="entry name" value="URACIL-DNA GLYCOSYLASE"/>
    <property type="match status" value="1"/>
</dbReference>
<dbReference type="Pfam" id="PF03167">
    <property type="entry name" value="UDG"/>
    <property type="match status" value="1"/>
</dbReference>
<dbReference type="SMART" id="SM00986">
    <property type="entry name" value="UDG"/>
    <property type="match status" value="1"/>
</dbReference>
<dbReference type="SMART" id="SM00987">
    <property type="entry name" value="UreE_C"/>
    <property type="match status" value="1"/>
</dbReference>
<dbReference type="SUPFAM" id="SSF52141">
    <property type="entry name" value="Uracil-DNA glycosylase-like"/>
    <property type="match status" value="1"/>
</dbReference>
<dbReference type="PROSITE" id="PS00130">
    <property type="entry name" value="U_DNA_GLYCOSYLASE"/>
    <property type="match status" value="1"/>
</dbReference>
<feature type="chain" id="PRO_1000199798" description="Uracil-DNA glycosylase">
    <location>
        <begin position="1"/>
        <end position="217"/>
    </location>
</feature>
<feature type="active site" description="Proton acceptor" evidence="1">
    <location>
        <position position="62"/>
    </location>
</feature>
<gene>
    <name evidence="1" type="primary">ung</name>
    <name type="ordered locus">SPJ_1087</name>
</gene>
<evidence type="ECO:0000255" key="1">
    <source>
        <dbReference type="HAMAP-Rule" id="MF_00148"/>
    </source>
</evidence>
<proteinExistence type="inferred from homology"/>
<organism>
    <name type="scientific">Streptococcus pneumoniae (strain JJA)</name>
    <dbReference type="NCBI Taxonomy" id="488222"/>
    <lineage>
        <taxon>Bacteria</taxon>
        <taxon>Bacillati</taxon>
        <taxon>Bacillota</taxon>
        <taxon>Bacilli</taxon>
        <taxon>Lactobacillales</taxon>
        <taxon>Streptococcaceae</taxon>
        <taxon>Streptococcus</taxon>
    </lineage>
</organism>
<reference key="1">
    <citation type="journal article" date="2010" name="Genome Biol.">
        <title>Structure and dynamics of the pan-genome of Streptococcus pneumoniae and closely related species.</title>
        <authorList>
            <person name="Donati C."/>
            <person name="Hiller N.L."/>
            <person name="Tettelin H."/>
            <person name="Muzzi A."/>
            <person name="Croucher N.J."/>
            <person name="Angiuoli S.V."/>
            <person name="Oggioni M."/>
            <person name="Dunning Hotopp J.C."/>
            <person name="Hu F.Z."/>
            <person name="Riley D.R."/>
            <person name="Covacci A."/>
            <person name="Mitchell T.J."/>
            <person name="Bentley S.D."/>
            <person name="Kilian M."/>
            <person name="Ehrlich G.D."/>
            <person name="Rappuoli R."/>
            <person name="Moxon E.R."/>
            <person name="Masignani V."/>
        </authorList>
    </citation>
    <scope>NUCLEOTIDE SEQUENCE [LARGE SCALE GENOMIC DNA]</scope>
    <source>
        <strain>JJA</strain>
    </source>
</reference>
<sequence length="217" mass="24050">MEHSSWHALIKAQLPEGYFGKINQFMEQVYSQGIIYPPKEKVFQALLTTLLEEVKVVILGQDPYHGPGQAQGLSFSVPDSIPAPPSLQNILKELSDDIGVKKSHDLTAWAEQGVLLLNACLTVPAGQANGHAGQIWEPFTDAVIQVVNHLDRPVVFVLWGAYARKKKALVTNPHHLIIESAHPSPLSVYRGFWGSKPFSKANAFLKETGQEPIDWLR</sequence>